<comment type="function">
    <text evidence="1">Essential subunit of the Sec protein translocation channel SecYEG. Clamps together the 2 halves of SecY. May contact the channel plug during translocation.</text>
</comment>
<comment type="subunit">
    <text evidence="1">Component of the Sec protein translocase complex. Heterotrimer consisting of SecY, SecE and SecG subunits. The heterotrimers can form oligomers, although 1 heterotrimer is thought to be able to translocate proteins. Interacts with the ribosome. Interacts with SecDF, and other proteins may be involved. Interacts with SecA.</text>
</comment>
<comment type="subcellular location">
    <subcellularLocation>
        <location evidence="1">Cell membrane</location>
        <topology evidence="1">Single-pass membrane protein</topology>
    </subcellularLocation>
</comment>
<comment type="similarity">
    <text evidence="1">Belongs to the SecE/SEC61-gamma family.</text>
</comment>
<gene>
    <name evidence="1" type="primary">secE</name>
    <name type="ordered locus">SAV0534</name>
</gene>
<feature type="chain" id="PRO_0000104174" description="Protein translocase subunit SecE">
    <location>
        <begin position="1"/>
        <end position="60"/>
    </location>
</feature>
<feature type="transmembrane region" description="Helical" evidence="1">
    <location>
        <begin position="31"/>
        <end position="51"/>
    </location>
</feature>
<proteinExistence type="inferred from homology"/>
<reference key="1">
    <citation type="journal article" date="2001" name="Lancet">
        <title>Whole genome sequencing of meticillin-resistant Staphylococcus aureus.</title>
        <authorList>
            <person name="Kuroda M."/>
            <person name="Ohta T."/>
            <person name="Uchiyama I."/>
            <person name="Baba T."/>
            <person name="Yuzawa H."/>
            <person name="Kobayashi I."/>
            <person name="Cui L."/>
            <person name="Oguchi A."/>
            <person name="Aoki K."/>
            <person name="Nagai Y."/>
            <person name="Lian J.-Q."/>
            <person name="Ito T."/>
            <person name="Kanamori M."/>
            <person name="Matsumaru H."/>
            <person name="Maruyama A."/>
            <person name="Murakami H."/>
            <person name="Hosoyama A."/>
            <person name="Mizutani-Ui Y."/>
            <person name="Takahashi N.K."/>
            <person name="Sawano T."/>
            <person name="Inoue R."/>
            <person name="Kaito C."/>
            <person name="Sekimizu K."/>
            <person name="Hirakawa H."/>
            <person name="Kuhara S."/>
            <person name="Goto S."/>
            <person name="Yabuzaki J."/>
            <person name="Kanehisa M."/>
            <person name="Yamashita A."/>
            <person name="Oshima K."/>
            <person name="Furuya K."/>
            <person name="Yoshino C."/>
            <person name="Shiba T."/>
            <person name="Hattori M."/>
            <person name="Ogasawara N."/>
            <person name="Hayashi H."/>
            <person name="Hiramatsu K."/>
        </authorList>
    </citation>
    <scope>NUCLEOTIDE SEQUENCE [LARGE SCALE GENOMIC DNA]</scope>
    <source>
        <strain>Mu50 / ATCC 700699</strain>
    </source>
</reference>
<sequence length="60" mass="6932">MAKKESFFKGVKSEMEKTSWPTKEELFKYTVIVVSTVIFFLVFFYALDLGITALKNLLFG</sequence>
<evidence type="ECO:0000255" key="1">
    <source>
        <dbReference type="HAMAP-Rule" id="MF_00422"/>
    </source>
</evidence>
<keyword id="KW-1003">Cell membrane</keyword>
<keyword id="KW-0472">Membrane</keyword>
<keyword id="KW-0653">Protein transport</keyword>
<keyword id="KW-0811">Translocation</keyword>
<keyword id="KW-0812">Transmembrane</keyword>
<keyword id="KW-1133">Transmembrane helix</keyword>
<keyword id="KW-0813">Transport</keyword>
<accession>P0A0I1</accession>
<accession>O06442</accession>
<protein>
    <recommendedName>
        <fullName evidence="1">Protein translocase subunit SecE</fullName>
    </recommendedName>
</protein>
<dbReference type="EMBL" id="BA000017">
    <property type="protein sequence ID" value="BAB56696.1"/>
    <property type="molecule type" value="Genomic_DNA"/>
</dbReference>
<dbReference type="RefSeq" id="WP_001074473.1">
    <property type="nucleotide sequence ID" value="NC_002758.2"/>
</dbReference>
<dbReference type="SMR" id="P0A0I1"/>
<dbReference type="GeneID" id="98344869"/>
<dbReference type="KEGG" id="sav:SAV0534"/>
<dbReference type="HOGENOM" id="CLU_113663_8_2_9"/>
<dbReference type="PhylomeDB" id="P0A0I1"/>
<dbReference type="Proteomes" id="UP000002481">
    <property type="component" value="Chromosome"/>
</dbReference>
<dbReference type="GO" id="GO:0005886">
    <property type="term" value="C:plasma membrane"/>
    <property type="evidence" value="ECO:0007669"/>
    <property type="project" value="UniProtKB-SubCell"/>
</dbReference>
<dbReference type="GO" id="GO:0008320">
    <property type="term" value="F:protein transmembrane transporter activity"/>
    <property type="evidence" value="ECO:0007669"/>
    <property type="project" value="UniProtKB-UniRule"/>
</dbReference>
<dbReference type="GO" id="GO:0065002">
    <property type="term" value="P:intracellular protein transmembrane transport"/>
    <property type="evidence" value="ECO:0007669"/>
    <property type="project" value="UniProtKB-UniRule"/>
</dbReference>
<dbReference type="GO" id="GO:0009306">
    <property type="term" value="P:protein secretion"/>
    <property type="evidence" value="ECO:0007669"/>
    <property type="project" value="UniProtKB-UniRule"/>
</dbReference>
<dbReference type="GO" id="GO:0006605">
    <property type="term" value="P:protein targeting"/>
    <property type="evidence" value="ECO:0007669"/>
    <property type="project" value="UniProtKB-UniRule"/>
</dbReference>
<dbReference type="GO" id="GO:0043952">
    <property type="term" value="P:protein transport by the Sec complex"/>
    <property type="evidence" value="ECO:0007669"/>
    <property type="project" value="UniProtKB-UniRule"/>
</dbReference>
<dbReference type="Gene3D" id="1.20.5.1030">
    <property type="entry name" value="Preprotein translocase secy subunit"/>
    <property type="match status" value="1"/>
</dbReference>
<dbReference type="HAMAP" id="MF_00422">
    <property type="entry name" value="SecE"/>
    <property type="match status" value="1"/>
</dbReference>
<dbReference type="InterPro" id="IPR005807">
    <property type="entry name" value="SecE_bac"/>
</dbReference>
<dbReference type="InterPro" id="IPR038379">
    <property type="entry name" value="SecE_sf"/>
</dbReference>
<dbReference type="InterPro" id="IPR001901">
    <property type="entry name" value="Translocase_SecE/Sec61-g"/>
</dbReference>
<dbReference type="NCBIfam" id="TIGR00964">
    <property type="entry name" value="secE_bact"/>
    <property type="match status" value="1"/>
</dbReference>
<dbReference type="PANTHER" id="PTHR33910">
    <property type="entry name" value="PROTEIN TRANSLOCASE SUBUNIT SECE"/>
    <property type="match status" value="1"/>
</dbReference>
<dbReference type="PANTHER" id="PTHR33910:SF1">
    <property type="entry name" value="PROTEIN TRANSLOCASE SUBUNIT SECE"/>
    <property type="match status" value="1"/>
</dbReference>
<dbReference type="Pfam" id="PF00584">
    <property type="entry name" value="SecE"/>
    <property type="match status" value="1"/>
</dbReference>
<dbReference type="PROSITE" id="PS01067">
    <property type="entry name" value="SECE_SEC61G"/>
    <property type="match status" value="1"/>
</dbReference>
<organism>
    <name type="scientific">Staphylococcus aureus (strain Mu50 / ATCC 700699)</name>
    <dbReference type="NCBI Taxonomy" id="158878"/>
    <lineage>
        <taxon>Bacteria</taxon>
        <taxon>Bacillati</taxon>
        <taxon>Bacillota</taxon>
        <taxon>Bacilli</taxon>
        <taxon>Bacillales</taxon>
        <taxon>Staphylococcaceae</taxon>
        <taxon>Staphylococcus</taxon>
    </lineage>
</organism>
<name>SECE_STAAM</name>